<dbReference type="EMBL" id="CP000437">
    <property type="protein sequence ID" value="ABI82895.1"/>
    <property type="molecule type" value="Genomic_DNA"/>
</dbReference>
<dbReference type="RefSeq" id="WP_011648694.1">
    <property type="nucleotide sequence ID" value="NC_017463.1"/>
</dbReference>
<dbReference type="SMR" id="Q0BLY9"/>
<dbReference type="KEGG" id="fth:FTH_1001"/>
<dbReference type="GO" id="GO:0022627">
    <property type="term" value="C:cytosolic small ribosomal subunit"/>
    <property type="evidence" value="ECO:0007669"/>
    <property type="project" value="TreeGrafter"/>
</dbReference>
<dbReference type="GO" id="GO:0070181">
    <property type="term" value="F:small ribosomal subunit rRNA binding"/>
    <property type="evidence" value="ECO:0007669"/>
    <property type="project" value="TreeGrafter"/>
</dbReference>
<dbReference type="GO" id="GO:0003735">
    <property type="term" value="F:structural constituent of ribosome"/>
    <property type="evidence" value="ECO:0007669"/>
    <property type="project" value="InterPro"/>
</dbReference>
<dbReference type="GO" id="GO:0006412">
    <property type="term" value="P:translation"/>
    <property type="evidence" value="ECO:0007669"/>
    <property type="project" value="UniProtKB-UniRule"/>
</dbReference>
<dbReference type="Gene3D" id="4.10.640.10">
    <property type="entry name" value="Ribosomal protein S18"/>
    <property type="match status" value="1"/>
</dbReference>
<dbReference type="HAMAP" id="MF_00270">
    <property type="entry name" value="Ribosomal_bS18"/>
    <property type="match status" value="1"/>
</dbReference>
<dbReference type="InterPro" id="IPR001648">
    <property type="entry name" value="Ribosomal_bS18"/>
</dbReference>
<dbReference type="InterPro" id="IPR018275">
    <property type="entry name" value="Ribosomal_bS18_CS"/>
</dbReference>
<dbReference type="InterPro" id="IPR036870">
    <property type="entry name" value="Ribosomal_bS18_sf"/>
</dbReference>
<dbReference type="NCBIfam" id="TIGR00165">
    <property type="entry name" value="S18"/>
    <property type="match status" value="1"/>
</dbReference>
<dbReference type="PANTHER" id="PTHR13479">
    <property type="entry name" value="30S RIBOSOMAL PROTEIN S18"/>
    <property type="match status" value="1"/>
</dbReference>
<dbReference type="PANTHER" id="PTHR13479:SF40">
    <property type="entry name" value="SMALL RIBOSOMAL SUBUNIT PROTEIN BS18M"/>
    <property type="match status" value="1"/>
</dbReference>
<dbReference type="Pfam" id="PF01084">
    <property type="entry name" value="Ribosomal_S18"/>
    <property type="match status" value="1"/>
</dbReference>
<dbReference type="PRINTS" id="PR00974">
    <property type="entry name" value="RIBOSOMALS18"/>
</dbReference>
<dbReference type="SUPFAM" id="SSF46911">
    <property type="entry name" value="Ribosomal protein S18"/>
    <property type="match status" value="1"/>
</dbReference>
<dbReference type="PROSITE" id="PS00057">
    <property type="entry name" value="RIBOSOMAL_S18"/>
    <property type="match status" value="1"/>
</dbReference>
<accession>Q0BLY9</accession>
<protein>
    <recommendedName>
        <fullName evidence="1">Small ribosomal subunit protein bS18</fullName>
    </recommendedName>
    <alternativeName>
        <fullName evidence="2">30S ribosomal protein S18</fullName>
    </alternativeName>
</protein>
<organism>
    <name type="scientific">Francisella tularensis subsp. holarctica (strain OSU18)</name>
    <dbReference type="NCBI Taxonomy" id="393011"/>
    <lineage>
        <taxon>Bacteria</taxon>
        <taxon>Pseudomonadati</taxon>
        <taxon>Pseudomonadota</taxon>
        <taxon>Gammaproteobacteria</taxon>
        <taxon>Thiotrichales</taxon>
        <taxon>Francisellaceae</taxon>
        <taxon>Francisella</taxon>
    </lineage>
</organism>
<sequence>MSRRKVCRFTVEGVKEIDYKDVNKLKAYINETGKIVPSRVTGTSAKYQRQLATAIKRARFLALLPYCDRHFN</sequence>
<proteinExistence type="inferred from homology"/>
<evidence type="ECO:0000255" key="1">
    <source>
        <dbReference type="HAMAP-Rule" id="MF_00270"/>
    </source>
</evidence>
<evidence type="ECO:0000305" key="2"/>
<comment type="function">
    <text evidence="1">Binds as a heterodimer with protein bS6 to the central domain of the 16S rRNA, where it helps stabilize the platform of the 30S subunit.</text>
</comment>
<comment type="subunit">
    <text evidence="1">Part of the 30S ribosomal subunit. Forms a tight heterodimer with protein bS6.</text>
</comment>
<comment type="similarity">
    <text evidence="1">Belongs to the bacterial ribosomal protein bS18 family.</text>
</comment>
<keyword id="KW-0687">Ribonucleoprotein</keyword>
<keyword id="KW-0689">Ribosomal protein</keyword>
<keyword id="KW-0694">RNA-binding</keyword>
<keyword id="KW-0699">rRNA-binding</keyword>
<feature type="chain" id="PRO_0000345472" description="Small ribosomal subunit protein bS18">
    <location>
        <begin position="1"/>
        <end position="72"/>
    </location>
</feature>
<gene>
    <name evidence="1" type="primary">rpsR</name>
    <name type="ordered locus">FTH_1001</name>
</gene>
<reference key="1">
    <citation type="journal article" date="2006" name="J. Bacteriol.">
        <title>Chromosome rearrangement and diversification of Francisella tularensis revealed by the type B (OSU18) genome sequence.</title>
        <authorList>
            <person name="Petrosino J.F."/>
            <person name="Xiang Q."/>
            <person name="Karpathy S.E."/>
            <person name="Jiang H."/>
            <person name="Yerrapragada S."/>
            <person name="Liu Y."/>
            <person name="Gioia J."/>
            <person name="Hemphill L."/>
            <person name="Gonzalez A."/>
            <person name="Raghavan T.M."/>
            <person name="Uzman A."/>
            <person name="Fox G.E."/>
            <person name="Highlander S."/>
            <person name="Reichard M."/>
            <person name="Morton R.J."/>
            <person name="Clinkenbeard K.D."/>
            <person name="Weinstock G.M."/>
        </authorList>
    </citation>
    <scope>NUCLEOTIDE SEQUENCE [LARGE SCALE GENOMIC DNA]</scope>
    <source>
        <strain>OSU18</strain>
    </source>
</reference>
<name>RS18_FRATO</name>